<feature type="chain" id="PRO_0000211752" description="Recombination-associated protein RdgC">
    <location>
        <begin position="1"/>
        <end position="304"/>
    </location>
</feature>
<keyword id="KW-0963">Cytoplasm</keyword>
<keyword id="KW-0233">DNA recombination</keyword>
<keyword id="KW-1185">Reference proteome</keyword>
<protein>
    <recommendedName>
        <fullName evidence="1">Recombination-associated protein RdgC</fullName>
    </recommendedName>
</protein>
<proteinExistence type="inferred from homology"/>
<reference key="1">
    <citation type="journal article" date="2000" name="Nature">
        <title>DNA sequence of both chromosomes of the cholera pathogen Vibrio cholerae.</title>
        <authorList>
            <person name="Heidelberg J.F."/>
            <person name="Eisen J.A."/>
            <person name="Nelson W.C."/>
            <person name="Clayton R.A."/>
            <person name="Gwinn M.L."/>
            <person name="Dodson R.J."/>
            <person name="Haft D.H."/>
            <person name="Hickey E.K."/>
            <person name="Peterson J.D."/>
            <person name="Umayam L.A."/>
            <person name="Gill S.R."/>
            <person name="Nelson K.E."/>
            <person name="Read T.D."/>
            <person name="Tettelin H."/>
            <person name="Richardson D.L."/>
            <person name="Ermolaeva M.D."/>
            <person name="Vamathevan J.J."/>
            <person name="Bass S."/>
            <person name="Qin H."/>
            <person name="Dragoi I."/>
            <person name="Sellers P."/>
            <person name="McDonald L.A."/>
            <person name="Utterback T.R."/>
            <person name="Fleischmann R.D."/>
            <person name="Nierman W.C."/>
            <person name="White O."/>
            <person name="Salzberg S.L."/>
            <person name="Smith H.O."/>
            <person name="Colwell R.R."/>
            <person name="Mekalanos J.J."/>
            <person name="Venter J.C."/>
            <person name="Fraser C.M."/>
        </authorList>
    </citation>
    <scope>NUCLEOTIDE SEQUENCE [LARGE SCALE GENOMIC DNA]</scope>
    <source>
        <strain>ATCC 39315 / El Tor Inaba N16961</strain>
    </source>
</reference>
<accession>Q9KU12</accession>
<organism>
    <name type="scientific">Vibrio cholerae serotype O1 (strain ATCC 39315 / El Tor Inaba N16961)</name>
    <dbReference type="NCBI Taxonomy" id="243277"/>
    <lineage>
        <taxon>Bacteria</taxon>
        <taxon>Pseudomonadati</taxon>
        <taxon>Pseudomonadota</taxon>
        <taxon>Gammaproteobacteria</taxon>
        <taxon>Vibrionales</taxon>
        <taxon>Vibrionaceae</taxon>
        <taxon>Vibrio</taxon>
    </lineage>
</organism>
<comment type="function">
    <text evidence="1">May be involved in recombination.</text>
</comment>
<comment type="subcellular location">
    <subcellularLocation>
        <location evidence="1">Cytoplasm</location>
        <location evidence="1">Nucleoid</location>
    </subcellularLocation>
</comment>
<comment type="similarity">
    <text evidence="1">Belongs to the RdgC family.</text>
</comment>
<evidence type="ECO:0000255" key="1">
    <source>
        <dbReference type="HAMAP-Rule" id="MF_00194"/>
    </source>
</evidence>
<sequence length="304" mass="34266">MWFKNCMVYRVNREVNFNADQLEKQLAEFRFTPCGSQDKQKFGWVSALGKHGDMMTHVSENRILVCAKREEKMLPASVIKDSLNAKVEEMEAEEGRPLKKKEKDALKEDIVIDLLPRAFSKSQLTFVLIMPTEGLILVDAGSYKKAEDVLSLLRKTMGSLPVVPAIPEIAVETTLTQWVKDGNLPQGFSLMEEAELKSLLDDGATIRCKKQELSSDEILSHIQANKVVTKLAINWQDRIRFVLAEDCSIKRLAYSDELKEQNDDIPHEDRAARLDADFSLLCGEMSVFLPDLFNALGGLPHPEA</sequence>
<name>RDGC_VIBCH</name>
<gene>
    <name evidence="1" type="primary">rdgC</name>
    <name type="ordered locus">VC_0718</name>
</gene>
<dbReference type="EMBL" id="AE003852">
    <property type="protein sequence ID" value="AAF93883.1"/>
    <property type="molecule type" value="Genomic_DNA"/>
</dbReference>
<dbReference type="PIR" id="G82288">
    <property type="entry name" value="G82288"/>
</dbReference>
<dbReference type="RefSeq" id="NP_230367.1">
    <property type="nucleotide sequence ID" value="NC_002505.1"/>
</dbReference>
<dbReference type="RefSeq" id="WP_000264267.1">
    <property type="nucleotide sequence ID" value="NZ_LT906614.1"/>
</dbReference>
<dbReference type="SMR" id="Q9KU12"/>
<dbReference type="STRING" id="243277.VC_0718"/>
<dbReference type="DNASU" id="2615727"/>
<dbReference type="EnsemblBacteria" id="AAF93883">
    <property type="protein sequence ID" value="AAF93883"/>
    <property type="gene ID" value="VC_0718"/>
</dbReference>
<dbReference type="KEGG" id="vch:VC_0718"/>
<dbReference type="PATRIC" id="fig|243277.26.peg.686"/>
<dbReference type="eggNOG" id="COG2974">
    <property type="taxonomic scope" value="Bacteria"/>
</dbReference>
<dbReference type="HOGENOM" id="CLU_052038_1_1_6"/>
<dbReference type="Proteomes" id="UP000000584">
    <property type="component" value="Chromosome 1"/>
</dbReference>
<dbReference type="GO" id="GO:0043590">
    <property type="term" value="C:bacterial nucleoid"/>
    <property type="evidence" value="ECO:0000318"/>
    <property type="project" value="GO_Central"/>
</dbReference>
<dbReference type="GO" id="GO:0005737">
    <property type="term" value="C:cytoplasm"/>
    <property type="evidence" value="ECO:0007669"/>
    <property type="project" value="UniProtKB-UniRule"/>
</dbReference>
<dbReference type="GO" id="GO:0003690">
    <property type="term" value="F:double-stranded DNA binding"/>
    <property type="evidence" value="ECO:0000318"/>
    <property type="project" value="GO_Central"/>
</dbReference>
<dbReference type="GO" id="GO:0006310">
    <property type="term" value="P:DNA recombination"/>
    <property type="evidence" value="ECO:0007669"/>
    <property type="project" value="UniProtKB-UniRule"/>
</dbReference>
<dbReference type="GO" id="GO:0000018">
    <property type="term" value="P:regulation of DNA recombination"/>
    <property type="evidence" value="ECO:0000318"/>
    <property type="project" value="GO_Central"/>
</dbReference>
<dbReference type="HAMAP" id="MF_00194">
    <property type="entry name" value="RdgC"/>
    <property type="match status" value="1"/>
</dbReference>
<dbReference type="InterPro" id="IPR007476">
    <property type="entry name" value="RdgC"/>
</dbReference>
<dbReference type="NCBIfam" id="NF001462">
    <property type="entry name" value="PRK00321.1-3"/>
    <property type="match status" value="1"/>
</dbReference>
<dbReference type="NCBIfam" id="NF001464">
    <property type="entry name" value="PRK00321.1-5"/>
    <property type="match status" value="1"/>
</dbReference>
<dbReference type="PANTHER" id="PTHR38103">
    <property type="entry name" value="RECOMBINATION-ASSOCIATED PROTEIN RDGC"/>
    <property type="match status" value="1"/>
</dbReference>
<dbReference type="PANTHER" id="PTHR38103:SF1">
    <property type="entry name" value="RECOMBINATION-ASSOCIATED PROTEIN RDGC"/>
    <property type="match status" value="1"/>
</dbReference>
<dbReference type="Pfam" id="PF04381">
    <property type="entry name" value="RdgC"/>
    <property type="match status" value="1"/>
</dbReference>